<protein>
    <recommendedName>
        <fullName evidence="1">Aspartyl/glutamyl-tRNA(Asn/Gln) amidotransferase subunit C</fullName>
        <shortName evidence="1">Asp/Glu-ADT subunit C</shortName>
        <ecNumber evidence="1">6.3.5.-</ecNumber>
    </recommendedName>
</protein>
<feature type="chain" id="PRO_1000016106" description="Aspartyl/glutamyl-tRNA(Asn/Gln) amidotransferase subunit C">
    <location>
        <begin position="1"/>
        <end position="95"/>
    </location>
</feature>
<sequence length="95" mass="10470">MAIEHADVLRAAHLARVGLGEDEATGYVDDLSRILEMVDQLQAVDTQGIAPLAHPLDATQRLRPDEVTEHNQRERFQACAPVTEGGLYLVPRVVE</sequence>
<evidence type="ECO:0000255" key="1">
    <source>
        <dbReference type="HAMAP-Rule" id="MF_00122"/>
    </source>
</evidence>
<organism>
    <name type="scientific">Chromohalobacter salexigens (strain ATCC BAA-138 / DSM 3043 / CIP 106854 / NCIMB 13768 / 1H11)</name>
    <dbReference type="NCBI Taxonomy" id="290398"/>
    <lineage>
        <taxon>Bacteria</taxon>
        <taxon>Pseudomonadati</taxon>
        <taxon>Pseudomonadota</taxon>
        <taxon>Gammaproteobacteria</taxon>
        <taxon>Oceanospirillales</taxon>
        <taxon>Halomonadaceae</taxon>
        <taxon>Chromohalobacter</taxon>
    </lineage>
</organism>
<keyword id="KW-0067">ATP-binding</keyword>
<keyword id="KW-0436">Ligase</keyword>
<keyword id="KW-0547">Nucleotide-binding</keyword>
<keyword id="KW-0648">Protein biosynthesis</keyword>
<keyword id="KW-1185">Reference proteome</keyword>
<accession>Q1QVB6</accession>
<gene>
    <name evidence="1" type="primary">gatC</name>
    <name type="ordered locus">Csal_2241</name>
</gene>
<proteinExistence type="inferred from homology"/>
<reference key="1">
    <citation type="journal article" date="2011" name="Stand. Genomic Sci.">
        <title>Complete genome sequence of the halophilic and highly halotolerant Chromohalobacter salexigens type strain (1H11(T)).</title>
        <authorList>
            <person name="Copeland A."/>
            <person name="O'Connor K."/>
            <person name="Lucas S."/>
            <person name="Lapidus A."/>
            <person name="Berry K.W."/>
            <person name="Detter J.C."/>
            <person name="Del Rio T.G."/>
            <person name="Hammon N."/>
            <person name="Dalin E."/>
            <person name="Tice H."/>
            <person name="Pitluck S."/>
            <person name="Bruce D."/>
            <person name="Goodwin L."/>
            <person name="Han C."/>
            <person name="Tapia R."/>
            <person name="Saunders E."/>
            <person name="Schmutz J."/>
            <person name="Brettin T."/>
            <person name="Larimer F."/>
            <person name="Land M."/>
            <person name="Hauser L."/>
            <person name="Vargas C."/>
            <person name="Nieto J.J."/>
            <person name="Kyrpides N.C."/>
            <person name="Ivanova N."/>
            <person name="Goker M."/>
            <person name="Klenk H.P."/>
            <person name="Csonka L.N."/>
            <person name="Woyke T."/>
        </authorList>
    </citation>
    <scope>NUCLEOTIDE SEQUENCE [LARGE SCALE GENOMIC DNA]</scope>
    <source>
        <strain>ATCC BAA-138 / DSM 3043 / CIP 106854 / NCIMB 13768 / 1H11</strain>
    </source>
</reference>
<name>GATC_CHRSD</name>
<comment type="function">
    <text evidence="1">Allows the formation of correctly charged Asn-tRNA(Asn) or Gln-tRNA(Gln) through the transamidation of misacylated Asp-tRNA(Asn) or Glu-tRNA(Gln) in organisms which lack either or both of asparaginyl-tRNA or glutaminyl-tRNA synthetases. The reaction takes place in the presence of glutamine and ATP through an activated phospho-Asp-tRNA(Asn) or phospho-Glu-tRNA(Gln).</text>
</comment>
<comment type="catalytic activity">
    <reaction evidence="1">
        <text>L-glutamyl-tRNA(Gln) + L-glutamine + ATP + H2O = L-glutaminyl-tRNA(Gln) + L-glutamate + ADP + phosphate + H(+)</text>
        <dbReference type="Rhea" id="RHEA:17521"/>
        <dbReference type="Rhea" id="RHEA-COMP:9681"/>
        <dbReference type="Rhea" id="RHEA-COMP:9684"/>
        <dbReference type="ChEBI" id="CHEBI:15377"/>
        <dbReference type="ChEBI" id="CHEBI:15378"/>
        <dbReference type="ChEBI" id="CHEBI:29985"/>
        <dbReference type="ChEBI" id="CHEBI:30616"/>
        <dbReference type="ChEBI" id="CHEBI:43474"/>
        <dbReference type="ChEBI" id="CHEBI:58359"/>
        <dbReference type="ChEBI" id="CHEBI:78520"/>
        <dbReference type="ChEBI" id="CHEBI:78521"/>
        <dbReference type="ChEBI" id="CHEBI:456216"/>
    </reaction>
</comment>
<comment type="catalytic activity">
    <reaction evidence="1">
        <text>L-aspartyl-tRNA(Asn) + L-glutamine + ATP + H2O = L-asparaginyl-tRNA(Asn) + L-glutamate + ADP + phosphate + 2 H(+)</text>
        <dbReference type="Rhea" id="RHEA:14513"/>
        <dbReference type="Rhea" id="RHEA-COMP:9674"/>
        <dbReference type="Rhea" id="RHEA-COMP:9677"/>
        <dbReference type="ChEBI" id="CHEBI:15377"/>
        <dbReference type="ChEBI" id="CHEBI:15378"/>
        <dbReference type="ChEBI" id="CHEBI:29985"/>
        <dbReference type="ChEBI" id="CHEBI:30616"/>
        <dbReference type="ChEBI" id="CHEBI:43474"/>
        <dbReference type="ChEBI" id="CHEBI:58359"/>
        <dbReference type="ChEBI" id="CHEBI:78515"/>
        <dbReference type="ChEBI" id="CHEBI:78516"/>
        <dbReference type="ChEBI" id="CHEBI:456216"/>
    </reaction>
</comment>
<comment type="subunit">
    <text evidence="1">Heterotrimer of A, B and C subunits.</text>
</comment>
<comment type="similarity">
    <text evidence="1">Belongs to the GatC family.</text>
</comment>
<dbReference type="EC" id="6.3.5.-" evidence="1"/>
<dbReference type="EMBL" id="CP000285">
    <property type="protein sequence ID" value="ABE59592.1"/>
    <property type="molecule type" value="Genomic_DNA"/>
</dbReference>
<dbReference type="RefSeq" id="WP_011507538.1">
    <property type="nucleotide sequence ID" value="NC_007963.1"/>
</dbReference>
<dbReference type="SMR" id="Q1QVB6"/>
<dbReference type="STRING" id="290398.Csal_2241"/>
<dbReference type="GeneID" id="95334959"/>
<dbReference type="KEGG" id="csa:Csal_2241"/>
<dbReference type="eggNOG" id="COG0721">
    <property type="taxonomic scope" value="Bacteria"/>
</dbReference>
<dbReference type="HOGENOM" id="CLU_105899_2_2_6"/>
<dbReference type="OrthoDB" id="9794326at2"/>
<dbReference type="Proteomes" id="UP000000239">
    <property type="component" value="Chromosome"/>
</dbReference>
<dbReference type="GO" id="GO:0050566">
    <property type="term" value="F:asparaginyl-tRNA synthase (glutamine-hydrolyzing) activity"/>
    <property type="evidence" value="ECO:0007669"/>
    <property type="project" value="RHEA"/>
</dbReference>
<dbReference type="GO" id="GO:0005524">
    <property type="term" value="F:ATP binding"/>
    <property type="evidence" value="ECO:0007669"/>
    <property type="project" value="UniProtKB-KW"/>
</dbReference>
<dbReference type="GO" id="GO:0050567">
    <property type="term" value="F:glutaminyl-tRNA synthase (glutamine-hydrolyzing) activity"/>
    <property type="evidence" value="ECO:0007669"/>
    <property type="project" value="UniProtKB-UniRule"/>
</dbReference>
<dbReference type="GO" id="GO:0070681">
    <property type="term" value="P:glutaminyl-tRNAGln biosynthesis via transamidation"/>
    <property type="evidence" value="ECO:0007669"/>
    <property type="project" value="TreeGrafter"/>
</dbReference>
<dbReference type="GO" id="GO:0006450">
    <property type="term" value="P:regulation of translational fidelity"/>
    <property type="evidence" value="ECO:0007669"/>
    <property type="project" value="InterPro"/>
</dbReference>
<dbReference type="GO" id="GO:0006412">
    <property type="term" value="P:translation"/>
    <property type="evidence" value="ECO:0007669"/>
    <property type="project" value="UniProtKB-UniRule"/>
</dbReference>
<dbReference type="Gene3D" id="1.10.20.60">
    <property type="entry name" value="Glu-tRNAGln amidotransferase C subunit, N-terminal domain"/>
    <property type="match status" value="1"/>
</dbReference>
<dbReference type="HAMAP" id="MF_00122">
    <property type="entry name" value="GatC"/>
    <property type="match status" value="1"/>
</dbReference>
<dbReference type="InterPro" id="IPR036113">
    <property type="entry name" value="Asp/Glu-ADT_sf_sub_c"/>
</dbReference>
<dbReference type="InterPro" id="IPR003837">
    <property type="entry name" value="GatC"/>
</dbReference>
<dbReference type="NCBIfam" id="TIGR00135">
    <property type="entry name" value="gatC"/>
    <property type="match status" value="1"/>
</dbReference>
<dbReference type="PANTHER" id="PTHR15004">
    <property type="entry name" value="GLUTAMYL-TRNA(GLN) AMIDOTRANSFERASE SUBUNIT C, MITOCHONDRIAL"/>
    <property type="match status" value="1"/>
</dbReference>
<dbReference type="PANTHER" id="PTHR15004:SF0">
    <property type="entry name" value="GLUTAMYL-TRNA(GLN) AMIDOTRANSFERASE SUBUNIT C, MITOCHONDRIAL"/>
    <property type="match status" value="1"/>
</dbReference>
<dbReference type="Pfam" id="PF02686">
    <property type="entry name" value="GatC"/>
    <property type="match status" value="1"/>
</dbReference>
<dbReference type="SUPFAM" id="SSF141000">
    <property type="entry name" value="Glu-tRNAGln amidotransferase C subunit"/>
    <property type="match status" value="1"/>
</dbReference>